<protein>
    <recommendedName>
        <fullName>Cysteine proteinase</fullName>
        <ecNumber evidence="2">3.4.22.-</ecNumber>
    </recommendedName>
    <alternativeName>
        <fullName>Clone PLBPC13</fullName>
    </alternativeName>
</protein>
<accession>P05993</accession>
<name>PAPA5_CARPA</name>
<comment type="similarity">
    <text evidence="3 4 5">Belongs to the peptidase C1 family.</text>
</comment>
<feature type="chain" id="PRO_0000050563" description="Cysteine proteinase">
    <location>
        <begin position="1" status="less than"/>
        <end position="96"/>
    </location>
</feature>
<feature type="active site" evidence="4">
    <location>
        <position position="31"/>
    </location>
</feature>
<feature type="active site" evidence="5">
    <location>
        <position position="58"/>
    </location>
</feature>
<feature type="disulfide bond" evidence="1">
    <location>
        <begin position="25"/>
        <end position="79"/>
    </location>
</feature>
<feature type="non-terminal residue">
    <location>
        <position position="1"/>
    </location>
</feature>
<dbReference type="EC" id="3.4.22.-" evidence="2"/>
<dbReference type="EMBL" id="X03971">
    <property type="protein sequence ID" value="CAA27609.1"/>
    <property type="molecule type" value="mRNA"/>
</dbReference>
<dbReference type="PIR" id="B26074">
    <property type="entry name" value="B26074"/>
</dbReference>
<dbReference type="SMR" id="P05993"/>
<dbReference type="GO" id="GO:0008234">
    <property type="term" value="F:cysteine-type peptidase activity"/>
    <property type="evidence" value="ECO:0007669"/>
    <property type="project" value="UniProtKB-KW"/>
</dbReference>
<dbReference type="GO" id="GO:0006508">
    <property type="term" value="P:proteolysis"/>
    <property type="evidence" value="ECO:0007669"/>
    <property type="project" value="UniProtKB-KW"/>
</dbReference>
<dbReference type="Gene3D" id="3.90.70.10">
    <property type="entry name" value="Cysteine proteinases"/>
    <property type="match status" value="1"/>
</dbReference>
<dbReference type="InterPro" id="IPR038765">
    <property type="entry name" value="Papain-like_cys_pep_sf"/>
</dbReference>
<dbReference type="InterPro" id="IPR025661">
    <property type="entry name" value="Pept_asp_AS"/>
</dbReference>
<dbReference type="InterPro" id="IPR025660">
    <property type="entry name" value="Pept_his_AS"/>
</dbReference>
<dbReference type="InterPro" id="IPR013128">
    <property type="entry name" value="Peptidase_C1A"/>
</dbReference>
<dbReference type="InterPro" id="IPR000668">
    <property type="entry name" value="Peptidase_C1A_C"/>
</dbReference>
<dbReference type="PANTHER" id="PTHR12411">
    <property type="entry name" value="CYSTEINE PROTEASE FAMILY C1-RELATED"/>
    <property type="match status" value="1"/>
</dbReference>
<dbReference type="Pfam" id="PF00112">
    <property type="entry name" value="Peptidase_C1"/>
    <property type="match status" value="1"/>
</dbReference>
<dbReference type="SUPFAM" id="SSF54001">
    <property type="entry name" value="Cysteine proteinases"/>
    <property type="match status" value="1"/>
</dbReference>
<dbReference type="PROSITE" id="PS00640">
    <property type="entry name" value="THIOL_PROTEASE_ASN"/>
    <property type="match status" value="1"/>
</dbReference>
<dbReference type="PROSITE" id="PS00639">
    <property type="entry name" value="THIOL_PROTEASE_HIS"/>
    <property type="match status" value="1"/>
</dbReference>
<reference key="1">
    <citation type="journal article" date="1986" name="Biochem. J.">
        <title>Molecular cloning of two cysteine proteinases from paw-paw (Carica papaya).</title>
        <authorList>
            <person name="McKee R.A."/>
            <person name="Adams S."/>
            <person name="Matthews J.A."/>
            <person name="Smith C.J."/>
            <person name="Smith H."/>
        </authorList>
    </citation>
    <scope>NUCLEOTIDE SEQUENCE [MRNA]</scope>
</reference>
<evidence type="ECO:0000250" key="1">
    <source>
        <dbReference type="UniProtKB" id="P25250"/>
    </source>
</evidence>
<evidence type="ECO:0000250" key="2">
    <source>
        <dbReference type="UniProtKB" id="P80884"/>
    </source>
</evidence>
<evidence type="ECO:0000255" key="3">
    <source>
        <dbReference type="PROSITE-ProRule" id="PRU10088"/>
    </source>
</evidence>
<evidence type="ECO:0000255" key="4">
    <source>
        <dbReference type="PROSITE-ProRule" id="PRU10089"/>
    </source>
</evidence>
<evidence type="ECO:0000255" key="5">
    <source>
        <dbReference type="PROSITE-ProRule" id="PRU10090"/>
    </source>
</evidence>
<organism>
    <name type="scientific">Carica papaya</name>
    <name type="common">Papaya</name>
    <dbReference type="NCBI Taxonomy" id="3649"/>
    <lineage>
        <taxon>Eukaryota</taxon>
        <taxon>Viridiplantae</taxon>
        <taxon>Streptophyta</taxon>
        <taxon>Embryophyta</taxon>
        <taxon>Tracheophyta</taxon>
        <taxon>Spermatophyta</taxon>
        <taxon>Magnoliopsida</taxon>
        <taxon>eudicotyledons</taxon>
        <taxon>Gunneridae</taxon>
        <taxon>Pentapetalae</taxon>
        <taxon>rosids</taxon>
        <taxon>malvids</taxon>
        <taxon>Brassicales</taxon>
        <taxon>Caricaceae</taxon>
        <taxon>Carica</taxon>
    </lineage>
</organism>
<sequence>GPLAVAINAAYMQTYIGGVSCPYICSRRLNHGVLLVGYGSAGYAPIRLKEKPYWVIKNSWGENWGENGYYKICRGRNICGVDSMVSTVAAVHTTSQ</sequence>
<proteinExistence type="evidence at transcript level"/>
<keyword id="KW-1015">Disulfide bond</keyword>
<keyword id="KW-0378">Hydrolase</keyword>
<keyword id="KW-0645">Protease</keyword>
<keyword id="KW-0788">Thiol protease</keyword>